<proteinExistence type="evidence at protein level"/>
<reference key="1">
    <citation type="journal article" date="1988" name="Biochim. Biophys. Acta">
        <title>Sequence and over-expression of subunits of adenosine triphosphate synthase in thermophilic bacterium PS3.</title>
        <authorList>
            <person name="Ohta S."/>
            <person name="Yohda M."/>
            <person name="Ishizuka M."/>
            <person name="Hirata H."/>
            <person name="Hamamoto T."/>
            <person name="Otawara-Hamamoto Y."/>
            <person name="Matsuda K."/>
            <person name="Kagawa Y."/>
        </authorList>
    </citation>
    <scope>NUCLEOTIDE SEQUENCE [GENOMIC DNA]</scope>
    <scope>PROTEIN SEQUENCE OF 1-42; 106-121 AND 164-174</scope>
    <scope>SUBUNIT</scope>
</reference>
<reference key="2">
    <citation type="journal article" date="1997" name="Structure">
        <title>The crystal structure of the nucleotide-free alpha 3 beta 3 subcomplex of F1-ATPase from the thermophilic Bacillus PS3 is a symmetric trimer.</title>
        <authorList>
            <person name="Shirakihara Y."/>
            <person name="Leslie A.G.W."/>
            <person name="Abrahams J.P."/>
            <person name="Walker J.E."/>
            <person name="Ueda T."/>
            <person name="Seikimoto Y."/>
            <person name="Kambara M."/>
            <person name="Saika K."/>
            <person name="Kagawa Y."/>
            <person name="Yoshida M."/>
        </authorList>
    </citation>
    <scope>X-RAY CRYSTALLOGRAPHY (3.2 ANGSTROMS)</scope>
</reference>
<evidence type="ECO:0000255" key="1">
    <source>
        <dbReference type="HAMAP-Rule" id="MF_01346"/>
    </source>
</evidence>
<evidence type="ECO:0000269" key="2">
    <source>
    </source>
</evidence>
<evidence type="ECO:0007829" key="3">
    <source>
        <dbReference type="PDB" id="1SKY"/>
    </source>
</evidence>
<gene>
    <name evidence="1" type="primary">atpA</name>
</gene>
<sequence>MSIRAEEISALIKQQIENYESQIQVSDVGTVIQVGDGIARAHGLDNVMSGEAVEFANAVMGMALNLEENNVGIVILGPYTGIKEGDEVRRTGRIMEVPVGETLIGRVVNPLGQPVDGLGPVETTETRPIESRAPGVMDRRSVHEPLQTGIKAIDALVPIGRGQRELIIGDRQTGKTSVAIDTIINQKDQNMICIYVAIGQKESTVATVVETLAKHGAPDYTIVVTASASQPAPLLFLAPYAGVAMGEYFMIMGKHVLVVIDDLSKQAAAYRQLSLLLRRPPGREAYPGDIFYLHSRLLERAAKLSDAKGGGSLTALPFVETQAGDISAYIPTNVISITDGQIFLQSDLFFSGVRPAINAGLSVSRVGGAAQIKAMKKVAGTLRLDLAAYRELEAFAQFGSDLDKATQANVARGARTVEVLKQDLHQPIPVEKQVLIIYALTRGFLDDIPVEDVRRFEKEFYLWLDQNGQHLLEHIRTTKDLPNEDDLNQAIEAFKKTFVVSQ</sequence>
<protein>
    <recommendedName>
        <fullName evidence="1">ATP synthase subunit alpha</fullName>
        <ecNumber evidence="1">7.1.2.2</ecNumber>
    </recommendedName>
    <alternativeName>
        <fullName evidence="1">ATP synthase F1 sector subunit alpha</fullName>
    </alternativeName>
    <alternativeName>
        <fullName evidence="1">F-ATPase subunit alpha</fullName>
    </alternativeName>
</protein>
<organism>
    <name type="scientific">Bacillus sp. (strain PS3)</name>
    <dbReference type="NCBI Taxonomy" id="2334"/>
    <lineage>
        <taxon>Bacteria</taxon>
        <taxon>Bacillati</taxon>
        <taxon>Bacillota</taxon>
        <taxon>Bacilli</taxon>
        <taxon>Bacillales</taxon>
        <taxon>Bacillaceae</taxon>
        <taxon>Bacillus</taxon>
    </lineage>
</organism>
<name>ATPA_BACP3</name>
<accession>P09219</accession>
<keyword id="KW-0002">3D-structure</keyword>
<keyword id="KW-0066">ATP synthesis</keyword>
<keyword id="KW-0067">ATP-binding</keyword>
<keyword id="KW-1003">Cell membrane</keyword>
<keyword id="KW-0139">CF(1)</keyword>
<keyword id="KW-0903">Direct protein sequencing</keyword>
<keyword id="KW-0375">Hydrogen ion transport</keyword>
<keyword id="KW-0406">Ion transport</keyword>
<keyword id="KW-0472">Membrane</keyword>
<keyword id="KW-0547">Nucleotide-binding</keyword>
<keyword id="KW-1278">Translocase</keyword>
<keyword id="KW-0813">Transport</keyword>
<dbReference type="EC" id="7.1.2.2" evidence="1"/>
<dbReference type="EMBL" id="X07804">
    <property type="protein sequence ID" value="CAA30652.1"/>
    <property type="molecule type" value="Genomic_DNA"/>
</dbReference>
<dbReference type="PDB" id="1SKY">
    <property type="method" value="X-ray"/>
    <property type="resolution" value="3.20 A"/>
    <property type="chains" value="B=1-502"/>
</dbReference>
<dbReference type="PDB" id="8U1H">
    <property type="method" value="EM"/>
    <property type="resolution" value="3.00 A"/>
    <property type="chains" value="A/B/C=1-502"/>
</dbReference>
<dbReference type="PDBsum" id="1SKY"/>
<dbReference type="PDBsum" id="8U1H"/>
<dbReference type="BMRB" id="P09219"/>
<dbReference type="SMR" id="P09219"/>
<dbReference type="DIP" id="DIP-6214N"/>
<dbReference type="IntAct" id="P09219">
    <property type="interactions" value="1"/>
</dbReference>
<dbReference type="MINT" id="P09219"/>
<dbReference type="ChEMBL" id="CHEMBL3308987"/>
<dbReference type="TCDB" id="3.A.2.1.14">
    <property type="family name" value="the h+- or na+-translocating f-type, v-type and a-type atpase (f-atpase) superfamily"/>
</dbReference>
<dbReference type="SABIO-RK" id="P09219"/>
<dbReference type="EvolutionaryTrace" id="P09219"/>
<dbReference type="GO" id="GO:0005886">
    <property type="term" value="C:plasma membrane"/>
    <property type="evidence" value="ECO:0007669"/>
    <property type="project" value="UniProtKB-SubCell"/>
</dbReference>
<dbReference type="GO" id="GO:0045259">
    <property type="term" value="C:proton-transporting ATP synthase complex"/>
    <property type="evidence" value="ECO:0007669"/>
    <property type="project" value="UniProtKB-KW"/>
</dbReference>
<dbReference type="GO" id="GO:0043531">
    <property type="term" value="F:ADP binding"/>
    <property type="evidence" value="ECO:0007669"/>
    <property type="project" value="TreeGrafter"/>
</dbReference>
<dbReference type="GO" id="GO:0005524">
    <property type="term" value="F:ATP binding"/>
    <property type="evidence" value="ECO:0007669"/>
    <property type="project" value="UniProtKB-UniRule"/>
</dbReference>
<dbReference type="GO" id="GO:0046933">
    <property type="term" value="F:proton-transporting ATP synthase activity, rotational mechanism"/>
    <property type="evidence" value="ECO:0007669"/>
    <property type="project" value="UniProtKB-UniRule"/>
</dbReference>
<dbReference type="CDD" id="cd18113">
    <property type="entry name" value="ATP-synt_F1_alpha_C"/>
    <property type="match status" value="1"/>
</dbReference>
<dbReference type="CDD" id="cd18116">
    <property type="entry name" value="ATP-synt_F1_alpha_N"/>
    <property type="match status" value="1"/>
</dbReference>
<dbReference type="CDD" id="cd01132">
    <property type="entry name" value="F1-ATPase_alpha_CD"/>
    <property type="match status" value="1"/>
</dbReference>
<dbReference type="FunFam" id="1.20.150.20:FF:000001">
    <property type="entry name" value="ATP synthase subunit alpha"/>
    <property type="match status" value="1"/>
</dbReference>
<dbReference type="FunFam" id="2.40.30.20:FF:000001">
    <property type="entry name" value="ATP synthase subunit alpha"/>
    <property type="match status" value="1"/>
</dbReference>
<dbReference type="FunFam" id="3.40.50.300:FF:000002">
    <property type="entry name" value="ATP synthase subunit alpha"/>
    <property type="match status" value="1"/>
</dbReference>
<dbReference type="Gene3D" id="2.40.30.20">
    <property type="match status" value="1"/>
</dbReference>
<dbReference type="Gene3D" id="1.20.150.20">
    <property type="entry name" value="ATP synthase alpha/beta chain, C-terminal domain"/>
    <property type="match status" value="1"/>
</dbReference>
<dbReference type="Gene3D" id="3.40.50.300">
    <property type="entry name" value="P-loop containing nucleotide triphosphate hydrolases"/>
    <property type="match status" value="1"/>
</dbReference>
<dbReference type="HAMAP" id="MF_01346">
    <property type="entry name" value="ATP_synth_alpha_bact"/>
    <property type="match status" value="1"/>
</dbReference>
<dbReference type="InterPro" id="IPR023366">
    <property type="entry name" value="ATP_synth_asu-like_sf"/>
</dbReference>
<dbReference type="InterPro" id="IPR000793">
    <property type="entry name" value="ATP_synth_asu_C"/>
</dbReference>
<dbReference type="InterPro" id="IPR038376">
    <property type="entry name" value="ATP_synth_asu_C_sf"/>
</dbReference>
<dbReference type="InterPro" id="IPR033732">
    <property type="entry name" value="ATP_synth_F1_a_nt-bd_dom"/>
</dbReference>
<dbReference type="InterPro" id="IPR005294">
    <property type="entry name" value="ATP_synth_F1_asu"/>
</dbReference>
<dbReference type="InterPro" id="IPR020003">
    <property type="entry name" value="ATPase_a/bsu_AS"/>
</dbReference>
<dbReference type="InterPro" id="IPR004100">
    <property type="entry name" value="ATPase_F1/V1/A1_a/bsu_N"/>
</dbReference>
<dbReference type="InterPro" id="IPR036121">
    <property type="entry name" value="ATPase_F1/V1/A1_a/bsu_N_sf"/>
</dbReference>
<dbReference type="InterPro" id="IPR000194">
    <property type="entry name" value="ATPase_F1/V1/A1_a/bsu_nucl-bd"/>
</dbReference>
<dbReference type="InterPro" id="IPR027417">
    <property type="entry name" value="P-loop_NTPase"/>
</dbReference>
<dbReference type="NCBIfam" id="TIGR00962">
    <property type="entry name" value="atpA"/>
    <property type="match status" value="1"/>
</dbReference>
<dbReference type="NCBIfam" id="NF009884">
    <property type="entry name" value="PRK13343.1"/>
    <property type="match status" value="1"/>
</dbReference>
<dbReference type="PANTHER" id="PTHR48082">
    <property type="entry name" value="ATP SYNTHASE SUBUNIT ALPHA, MITOCHONDRIAL"/>
    <property type="match status" value="1"/>
</dbReference>
<dbReference type="PANTHER" id="PTHR48082:SF2">
    <property type="entry name" value="ATP SYNTHASE SUBUNIT ALPHA, MITOCHONDRIAL"/>
    <property type="match status" value="1"/>
</dbReference>
<dbReference type="Pfam" id="PF00006">
    <property type="entry name" value="ATP-synt_ab"/>
    <property type="match status" value="1"/>
</dbReference>
<dbReference type="Pfam" id="PF00306">
    <property type="entry name" value="ATP-synt_ab_C"/>
    <property type="match status" value="1"/>
</dbReference>
<dbReference type="Pfam" id="PF02874">
    <property type="entry name" value="ATP-synt_ab_N"/>
    <property type="match status" value="1"/>
</dbReference>
<dbReference type="PIRSF" id="PIRSF039088">
    <property type="entry name" value="F_ATPase_subunit_alpha"/>
    <property type="match status" value="1"/>
</dbReference>
<dbReference type="SUPFAM" id="SSF47917">
    <property type="entry name" value="C-terminal domain of alpha and beta subunits of F1 ATP synthase"/>
    <property type="match status" value="1"/>
</dbReference>
<dbReference type="SUPFAM" id="SSF50615">
    <property type="entry name" value="N-terminal domain of alpha and beta subunits of F1 ATP synthase"/>
    <property type="match status" value="1"/>
</dbReference>
<dbReference type="SUPFAM" id="SSF52540">
    <property type="entry name" value="P-loop containing nucleoside triphosphate hydrolases"/>
    <property type="match status" value="1"/>
</dbReference>
<dbReference type="PROSITE" id="PS00152">
    <property type="entry name" value="ATPASE_ALPHA_BETA"/>
    <property type="match status" value="1"/>
</dbReference>
<comment type="function">
    <text>Produces ATP from ADP in the presence of a proton gradient across the membrane. The alpha chain is a regulatory subunit.</text>
</comment>
<comment type="catalytic activity">
    <reaction evidence="1">
        <text>ATP + H2O + 4 H(+)(in) = ADP + phosphate + 5 H(+)(out)</text>
        <dbReference type="Rhea" id="RHEA:57720"/>
        <dbReference type="ChEBI" id="CHEBI:15377"/>
        <dbReference type="ChEBI" id="CHEBI:15378"/>
        <dbReference type="ChEBI" id="CHEBI:30616"/>
        <dbReference type="ChEBI" id="CHEBI:43474"/>
        <dbReference type="ChEBI" id="CHEBI:456216"/>
        <dbReference type="EC" id="7.1.2.2"/>
    </reaction>
</comment>
<comment type="subunit">
    <text evidence="1 2">F-type ATPases have 2 components, CF(1) - the catalytic core - and CF(0) - the membrane proton channel. CF(1) has five subunits: alpha(3), beta(3), gamma(1), delta(1), epsilon(1). CF(0) has three main subunits: a(1), b(2) and c(9-12). The alpha and beta chains form an alternating ring which encloses part of the gamma chain. CF(1) is attached to CF(0) by a central stalk formed by the gamma and epsilon chains, while a peripheral stalk is formed by the delta and b chains.</text>
</comment>
<comment type="subcellular location">
    <subcellularLocation>
        <location evidence="1">Cell membrane</location>
        <topology evidence="1">Peripheral membrane protein</topology>
    </subcellularLocation>
</comment>
<comment type="similarity">
    <text evidence="1">Belongs to the ATPase alpha/beta chains family.</text>
</comment>
<feature type="chain" id="PRO_0000144316" description="ATP synthase subunit alpha">
    <location>
        <begin position="1"/>
        <end position="502"/>
    </location>
</feature>
<feature type="binding site" evidence="1">
    <location>
        <begin position="169"/>
        <end position="176"/>
    </location>
    <ligand>
        <name>ATP</name>
        <dbReference type="ChEBI" id="CHEBI:30616"/>
    </ligand>
</feature>
<feature type="site" description="Required for activity" evidence="1">
    <location>
        <position position="362"/>
    </location>
</feature>
<feature type="helix" evidence="3">
    <location>
        <begin position="25"/>
        <end position="27"/>
    </location>
</feature>
<feature type="strand" evidence="3">
    <location>
        <begin position="28"/>
        <end position="35"/>
    </location>
</feature>
<feature type="strand" evidence="3">
    <location>
        <begin position="38"/>
        <end position="43"/>
    </location>
</feature>
<feature type="strand" evidence="3">
    <location>
        <begin position="51"/>
        <end position="55"/>
    </location>
</feature>
<feature type="strand" evidence="3">
    <location>
        <begin position="60"/>
        <end position="67"/>
    </location>
</feature>
<feature type="strand" evidence="3">
    <location>
        <begin position="70"/>
        <end position="77"/>
    </location>
</feature>
<feature type="strand" evidence="3">
    <location>
        <begin position="87"/>
        <end position="98"/>
    </location>
</feature>
<feature type="turn" evidence="3">
    <location>
        <begin position="102"/>
        <end position="105"/>
    </location>
</feature>
<feature type="strand" evidence="3">
    <location>
        <begin position="116"/>
        <end position="118"/>
    </location>
</feature>
<feature type="strand" evidence="3">
    <location>
        <begin position="126"/>
        <end position="130"/>
    </location>
</feature>
<feature type="strand" evidence="3">
    <location>
        <begin position="136"/>
        <end position="139"/>
    </location>
</feature>
<feature type="strand" evidence="3">
    <location>
        <begin position="144"/>
        <end position="146"/>
    </location>
</feature>
<feature type="helix" evidence="3">
    <location>
        <begin position="151"/>
        <end position="156"/>
    </location>
</feature>
<feature type="strand" evidence="3">
    <location>
        <begin position="166"/>
        <end position="169"/>
    </location>
</feature>
<feature type="helix" evidence="3">
    <location>
        <begin position="175"/>
        <end position="184"/>
    </location>
</feature>
<feature type="turn" evidence="3">
    <location>
        <begin position="185"/>
        <end position="190"/>
    </location>
</feature>
<feature type="strand" evidence="3">
    <location>
        <begin position="192"/>
        <end position="199"/>
    </location>
</feature>
<feature type="helix" evidence="3">
    <location>
        <begin position="202"/>
        <end position="214"/>
    </location>
</feature>
<feature type="strand" evidence="3">
    <location>
        <begin position="220"/>
        <end position="226"/>
    </location>
</feature>
<feature type="helix" evidence="3">
    <location>
        <begin position="232"/>
        <end position="250"/>
    </location>
</feature>
<feature type="turn" evidence="3">
    <location>
        <begin position="251"/>
        <end position="253"/>
    </location>
</feature>
<feature type="strand" evidence="3">
    <location>
        <begin position="255"/>
        <end position="261"/>
    </location>
</feature>
<feature type="helix" evidence="3">
    <location>
        <begin position="263"/>
        <end position="276"/>
    </location>
</feature>
<feature type="helix" evidence="3">
    <location>
        <begin position="283"/>
        <end position="285"/>
    </location>
</feature>
<feature type="helix" evidence="3">
    <location>
        <begin position="290"/>
        <end position="298"/>
    </location>
</feature>
<feature type="helix" evidence="3">
    <location>
        <begin position="306"/>
        <end position="308"/>
    </location>
</feature>
<feature type="strand" evidence="3">
    <location>
        <begin position="312"/>
        <end position="320"/>
    </location>
</feature>
<feature type="helix" evidence="3">
    <location>
        <begin position="322"/>
        <end position="324"/>
    </location>
</feature>
<feature type="helix" evidence="3">
    <location>
        <begin position="329"/>
        <end position="335"/>
    </location>
</feature>
<feature type="strand" evidence="3">
    <location>
        <begin position="338"/>
        <end position="344"/>
    </location>
</feature>
<feature type="helix" evidence="3">
    <location>
        <begin position="346"/>
        <end position="352"/>
    </location>
</feature>
<feature type="turn" evidence="3">
    <location>
        <begin position="359"/>
        <end position="361"/>
    </location>
</feature>
<feature type="strand" evidence="3">
    <location>
        <begin position="363"/>
        <end position="366"/>
    </location>
</feature>
<feature type="strand" evidence="3">
    <location>
        <begin position="368"/>
        <end position="371"/>
    </location>
</feature>
<feature type="helix" evidence="3">
    <location>
        <begin position="373"/>
        <end position="392"/>
    </location>
</feature>
<feature type="helix" evidence="3">
    <location>
        <begin position="404"/>
        <end position="420"/>
    </location>
</feature>
<feature type="helix" evidence="3">
    <location>
        <begin position="430"/>
        <end position="439"/>
    </location>
</feature>
<feature type="turn" evidence="3">
    <location>
        <begin position="440"/>
        <end position="447"/>
    </location>
</feature>
<feature type="helix" evidence="3">
    <location>
        <begin position="450"/>
        <end position="452"/>
    </location>
</feature>
<feature type="helix" evidence="3">
    <location>
        <begin position="453"/>
        <end position="466"/>
    </location>
</feature>
<feature type="helix" evidence="3">
    <location>
        <begin position="467"/>
        <end position="470"/>
    </location>
</feature>
<feature type="helix" evidence="3">
    <location>
        <begin position="472"/>
        <end position="478"/>
    </location>
</feature>
<feature type="helix" evidence="3">
    <location>
        <begin position="483"/>
        <end position="497"/>
    </location>
</feature>